<organism>
    <name type="scientific">Flavobacterium johnsoniae (strain ATCC 17061 / DSM 2064 / JCM 8514 / BCRC 14874 / CCUG 350202 / NBRC 14942 / NCIMB 11054 / UW101)</name>
    <name type="common">Cytophaga johnsonae</name>
    <dbReference type="NCBI Taxonomy" id="376686"/>
    <lineage>
        <taxon>Bacteria</taxon>
        <taxon>Pseudomonadati</taxon>
        <taxon>Bacteroidota</taxon>
        <taxon>Flavobacteriia</taxon>
        <taxon>Flavobacteriales</taxon>
        <taxon>Flavobacteriaceae</taxon>
        <taxon>Flavobacterium</taxon>
    </lineage>
</organism>
<gene>
    <name evidence="1" type="primary">hutI</name>
    <name type="ordered locus">Fjoh_4570</name>
</gene>
<proteinExistence type="inferred from homology"/>
<protein>
    <recommendedName>
        <fullName evidence="1">Imidazolonepropionase</fullName>
        <ecNumber evidence="1">3.5.2.7</ecNumber>
    </recommendedName>
    <alternativeName>
        <fullName evidence="1">Imidazolone-5-propionate hydrolase</fullName>
    </alternativeName>
</protein>
<comment type="function">
    <text evidence="1">Catalyzes the hydrolytic cleavage of the carbon-nitrogen bond in imidazolone-5-propanoate to yield N-formimidoyl-L-glutamate. It is the third step in the universal histidine degradation pathway.</text>
</comment>
<comment type="catalytic activity">
    <reaction evidence="1">
        <text>4-imidazolone-5-propanoate + H2O = N-formimidoyl-L-glutamate</text>
        <dbReference type="Rhea" id="RHEA:23660"/>
        <dbReference type="ChEBI" id="CHEBI:15377"/>
        <dbReference type="ChEBI" id="CHEBI:58928"/>
        <dbReference type="ChEBI" id="CHEBI:77893"/>
        <dbReference type="EC" id="3.5.2.7"/>
    </reaction>
</comment>
<comment type="cofactor">
    <cofactor evidence="1">
        <name>Zn(2+)</name>
        <dbReference type="ChEBI" id="CHEBI:29105"/>
    </cofactor>
    <cofactor evidence="1">
        <name>Fe(3+)</name>
        <dbReference type="ChEBI" id="CHEBI:29034"/>
    </cofactor>
    <text evidence="1">Binds 1 zinc or iron ion per subunit.</text>
</comment>
<comment type="pathway">
    <text evidence="1">Amino-acid degradation; L-histidine degradation into L-glutamate; N-formimidoyl-L-glutamate from L-histidine: step 3/3.</text>
</comment>
<comment type="subcellular location">
    <subcellularLocation>
        <location evidence="1">Cytoplasm</location>
    </subcellularLocation>
</comment>
<comment type="similarity">
    <text evidence="1">Belongs to the metallo-dependent hydrolases superfamily. HutI family.</text>
</comment>
<dbReference type="EC" id="3.5.2.7" evidence="1"/>
<dbReference type="EMBL" id="CP000685">
    <property type="protein sequence ID" value="ABQ07569.1"/>
    <property type="molecule type" value="Genomic_DNA"/>
</dbReference>
<dbReference type="RefSeq" id="WP_012026535.1">
    <property type="nucleotide sequence ID" value="NC_009441.1"/>
</dbReference>
<dbReference type="SMR" id="A5FB49"/>
<dbReference type="STRING" id="376686.Fjoh_4570"/>
<dbReference type="KEGG" id="fjo:Fjoh_4570"/>
<dbReference type="eggNOG" id="COG1228">
    <property type="taxonomic scope" value="Bacteria"/>
</dbReference>
<dbReference type="HOGENOM" id="CLU_041647_0_1_10"/>
<dbReference type="OrthoDB" id="9776455at2"/>
<dbReference type="UniPathway" id="UPA00379">
    <property type="reaction ID" value="UER00551"/>
</dbReference>
<dbReference type="Proteomes" id="UP000006694">
    <property type="component" value="Chromosome"/>
</dbReference>
<dbReference type="GO" id="GO:0005737">
    <property type="term" value="C:cytoplasm"/>
    <property type="evidence" value="ECO:0007669"/>
    <property type="project" value="UniProtKB-SubCell"/>
</dbReference>
<dbReference type="GO" id="GO:0050480">
    <property type="term" value="F:imidazolonepropionase activity"/>
    <property type="evidence" value="ECO:0007669"/>
    <property type="project" value="UniProtKB-UniRule"/>
</dbReference>
<dbReference type="GO" id="GO:0005506">
    <property type="term" value="F:iron ion binding"/>
    <property type="evidence" value="ECO:0007669"/>
    <property type="project" value="UniProtKB-UniRule"/>
</dbReference>
<dbReference type="GO" id="GO:0008270">
    <property type="term" value="F:zinc ion binding"/>
    <property type="evidence" value="ECO:0007669"/>
    <property type="project" value="UniProtKB-UniRule"/>
</dbReference>
<dbReference type="GO" id="GO:0019556">
    <property type="term" value="P:L-histidine catabolic process to glutamate and formamide"/>
    <property type="evidence" value="ECO:0007669"/>
    <property type="project" value="UniProtKB-UniPathway"/>
</dbReference>
<dbReference type="GO" id="GO:0019557">
    <property type="term" value="P:L-histidine catabolic process to glutamate and formate"/>
    <property type="evidence" value="ECO:0007669"/>
    <property type="project" value="UniProtKB-UniPathway"/>
</dbReference>
<dbReference type="CDD" id="cd01296">
    <property type="entry name" value="Imidazolone-5PH"/>
    <property type="match status" value="1"/>
</dbReference>
<dbReference type="FunFam" id="3.20.20.140:FF:000007">
    <property type="entry name" value="Imidazolonepropionase"/>
    <property type="match status" value="1"/>
</dbReference>
<dbReference type="Gene3D" id="3.20.20.140">
    <property type="entry name" value="Metal-dependent hydrolases"/>
    <property type="match status" value="1"/>
</dbReference>
<dbReference type="Gene3D" id="2.30.40.10">
    <property type="entry name" value="Urease, subunit C, domain 1"/>
    <property type="match status" value="1"/>
</dbReference>
<dbReference type="HAMAP" id="MF_00372">
    <property type="entry name" value="HutI"/>
    <property type="match status" value="1"/>
</dbReference>
<dbReference type="InterPro" id="IPR006680">
    <property type="entry name" value="Amidohydro-rel"/>
</dbReference>
<dbReference type="InterPro" id="IPR005920">
    <property type="entry name" value="HutI"/>
</dbReference>
<dbReference type="InterPro" id="IPR011059">
    <property type="entry name" value="Metal-dep_hydrolase_composite"/>
</dbReference>
<dbReference type="InterPro" id="IPR032466">
    <property type="entry name" value="Metal_Hydrolase"/>
</dbReference>
<dbReference type="NCBIfam" id="TIGR01224">
    <property type="entry name" value="hutI"/>
    <property type="match status" value="1"/>
</dbReference>
<dbReference type="PANTHER" id="PTHR42752">
    <property type="entry name" value="IMIDAZOLONEPROPIONASE"/>
    <property type="match status" value="1"/>
</dbReference>
<dbReference type="PANTHER" id="PTHR42752:SF1">
    <property type="entry name" value="IMIDAZOLONEPROPIONASE-RELATED"/>
    <property type="match status" value="1"/>
</dbReference>
<dbReference type="Pfam" id="PF01979">
    <property type="entry name" value="Amidohydro_1"/>
    <property type="match status" value="1"/>
</dbReference>
<dbReference type="SUPFAM" id="SSF51338">
    <property type="entry name" value="Composite domain of metallo-dependent hydrolases"/>
    <property type="match status" value="1"/>
</dbReference>
<dbReference type="SUPFAM" id="SSF51556">
    <property type="entry name" value="Metallo-dependent hydrolases"/>
    <property type="match status" value="1"/>
</dbReference>
<feature type="chain" id="PRO_1000079822" description="Imidazolonepropionase">
    <location>
        <begin position="1"/>
        <end position="411"/>
    </location>
</feature>
<feature type="binding site" evidence="1">
    <location>
        <position position="78"/>
    </location>
    <ligand>
        <name>Fe(3+)</name>
        <dbReference type="ChEBI" id="CHEBI:29034"/>
    </ligand>
</feature>
<feature type="binding site" evidence="1">
    <location>
        <position position="78"/>
    </location>
    <ligand>
        <name>Zn(2+)</name>
        <dbReference type="ChEBI" id="CHEBI:29105"/>
    </ligand>
</feature>
<feature type="binding site" evidence="1">
    <location>
        <position position="80"/>
    </location>
    <ligand>
        <name>Fe(3+)</name>
        <dbReference type="ChEBI" id="CHEBI:29034"/>
    </ligand>
</feature>
<feature type="binding site" evidence="1">
    <location>
        <position position="80"/>
    </location>
    <ligand>
        <name>Zn(2+)</name>
        <dbReference type="ChEBI" id="CHEBI:29105"/>
    </ligand>
</feature>
<feature type="binding site" evidence="1">
    <location>
        <position position="87"/>
    </location>
    <ligand>
        <name>4-imidazolone-5-propanoate</name>
        <dbReference type="ChEBI" id="CHEBI:77893"/>
    </ligand>
</feature>
<feature type="binding site" evidence="1">
    <location>
        <position position="150"/>
    </location>
    <ligand>
        <name>4-imidazolone-5-propanoate</name>
        <dbReference type="ChEBI" id="CHEBI:77893"/>
    </ligand>
</feature>
<feature type="binding site" evidence="1">
    <location>
        <position position="150"/>
    </location>
    <ligand>
        <name>N-formimidoyl-L-glutamate</name>
        <dbReference type="ChEBI" id="CHEBI:58928"/>
    </ligand>
</feature>
<feature type="binding site" evidence="1">
    <location>
        <position position="183"/>
    </location>
    <ligand>
        <name>4-imidazolone-5-propanoate</name>
        <dbReference type="ChEBI" id="CHEBI:77893"/>
    </ligand>
</feature>
<feature type="binding site" evidence="1">
    <location>
        <position position="248"/>
    </location>
    <ligand>
        <name>Fe(3+)</name>
        <dbReference type="ChEBI" id="CHEBI:29034"/>
    </ligand>
</feature>
<feature type="binding site" evidence="1">
    <location>
        <position position="248"/>
    </location>
    <ligand>
        <name>Zn(2+)</name>
        <dbReference type="ChEBI" id="CHEBI:29105"/>
    </ligand>
</feature>
<feature type="binding site" evidence="1">
    <location>
        <position position="251"/>
    </location>
    <ligand>
        <name>4-imidazolone-5-propanoate</name>
        <dbReference type="ChEBI" id="CHEBI:77893"/>
    </ligand>
</feature>
<feature type="binding site" evidence="1">
    <location>
        <position position="322"/>
    </location>
    <ligand>
        <name>Fe(3+)</name>
        <dbReference type="ChEBI" id="CHEBI:29034"/>
    </ligand>
</feature>
<feature type="binding site" evidence="1">
    <location>
        <position position="322"/>
    </location>
    <ligand>
        <name>Zn(2+)</name>
        <dbReference type="ChEBI" id="CHEBI:29105"/>
    </ligand>
</feature>
<feature type="binding site" evidence="1">
    <location>
        <position position="324"/>
    </location>
    <ligand>
        <name>N-formimidoyl-L-glutamate</name>
        <dbReference type="ChEBI" id="CHEBI:58928"/>
    </ligand>
</feature>
<feature type="binding site" evidence="1">
    <location>
        <position position="326"/>
    </location>
    <ligand>
        <name>N-formimidoyl-L-glutamate</name>
        <dbReference type="ChEBI" id="CHEBI:58928"/>
    </ligand>
</feature>
<feature type="binding site" evidence="1">
    <location>
        <position position="327"/>
    </location>
    <ligand>
        <name>4-imidazolone-5-propanoate</name>
        <dbReference type="ChEBI" id="CHEBI:77893"/>
    </ligand>
</feature>
<reference key="1">
    <citation type="journal article" date="2009" name="Appl. Environ. Microbiol.">
        <title>Novel features of the polysaccharide-digesting gliding bacterium Flavobacterium johnsoniae as revealed by genome sequence analysis.</title>
        <authorList>
            <person name="McBride M.J."/>
            <person name="Xie G."/>
            <person name="Martens E.C."/>
            <person name="Lapidus A."/>
            <person name="Henrissat B."/>
            <person name="Rhodes R.G."/>
            <person name="Goltsman E."/>
            <person name="Wang W."/>
            <person name="Xu J."/>
            <person name="Hunnicutt D.W."/>
            <person name="Staroscik A.M."/>
            <person name="Hoover T.R."/>
            <person name="Cheng Y.Q."/>
            <person name="Stein J.L."/>
        </authorList>
    </citation>
    <scope>NUCLEOTIDE SEQUENCE [LARGE SCALE GENOMIC DNA]</scope>
    <source>
        <strain>ATCC 17061 / DSM 2064 / JCM 8514 / BCRC 14874 / CCUG 350202 / NBRC 14942 / NCIMB 11054 / UW101</strain>
    </source>
</reference>
<accession>A5FB49</accession>
<name>HUTI_FLAJ1</name>
<sequence length="411" mass="45076">MITLIKNIQELLQVRQTSISKVSGAEMAELPTIKNAFLVIKDDLIADFGSMENLPEIKADSIINASGRVVLPAWCDSHTHIVYAGNREQEFVDRINGFTYEEIANRGGGILNSAKKLNETSEEEIYEQSKIRLEEVMRLGTGAVEIKSGYGLTVEGELKMLRVIKKLAENYPISIKATFLGAHAFPTHYKENKAGYIDEIITKMLPEIAQNKLADYVDVFCESGYFSVEETEKIMQAGIDFGLKPKIHVNQFNSIGGIQSGVKFNALSVDHLEIMNPEDIEALKGTETMPVALPSCSYFLSIPYTPAREMIKAGLPLALATDFNPGSTPSGNMNFVVATACIKMKMTPEEAINAATINGAYAMGLSETHGSITKGKKANLIITKPISSYYQIPYAFGSNLIEDVLIDGQII</sequence>
<keyword id="KW-0963">Cytoplasm</keyword>
<keyword id="KW-0369">Histidine metabolism</keyword>
<keyword id="KW-0378">Hydrolase</keyword>
<keyword id="KW-0408">Iron</keyword>
<keyword id="KW-0479">Metal-binding</keyword>
<keyword id="KW-0862">Zinc</keyword>
<evidence type="ECO:0000255" key="1">
    <source>
        <dbReference type="HAMAP-Rule" id="MF_00372"/>
    </source>
</evidence>